<dbReference type="EC" id="3.2.1.26"/>
<dbReference type="EMBL" id="M58362">
    <property type="protein sequence ID" value="AAA03516.1"/>
    <property type="molecule type" value="mRNA"/>
</dbReference>
<dbReference type="EMBL" id="X69321">
    <property type="protein sequence ID" value="CAA49162.1"/>
    <property type="molecule type" value="Genomic_DNA"/>
</dbReference>
<dbReference type="PIR" id="JQ0991">
    <property type="entry name" value="JQ0991"/>
</dbReference>
<dbReference type="PIR" id="S61503">
    <property type="entry name" value="S61503"/>
</dbReference>
<dbReference type="SMR" id="P26792"/>
<dbReference type="CAZy" id="GH32">
    <property type="family name" value="Glycoside Hydrolase Family 32"/>
</dbReference>
<dbReference type="GlyConnect" id="69">
    <property type="glycosylation" value="9 N-Linked glycans (3 sites)"/>
</dbReference>
<dbReference type="GlyCosmos" id="P26792">
    <property type="glycosylation" value="5 sites, 10 glycans"/>
</dbReference>
<dbReference type="GO" id="GO:0005576">
    <property type="term" value="C:extracellular region"/>
    <property type="evidence" value="ECO:0007669"/>
    <property type="project" value="UniProtKB-KW"/>
</dbReference>
<dbReference type="GO" id="GO:0004564">
    <property type="term" value="F:beta-fructofuranosidase activity"/>
    <property type="evidence" value="ECO:0007669"/>
    <property type="project" value="UniProtKB-EC"/>
</dbReference>
<dbReference type="GO" id="GO:0005975">
    <property type="term" value="P:carbohydrate metabolic process"/>
    <property type="evidence" value="ECO:0007669"/>
    <property type="project" value="InterPro"/>
</dbReference>
<dbReference type="CDD" id="cd18624">
    <property type="entry name" value="GH32_Fruct1-like"/>
    <property type="match status" value="1"/>
</dbReference>
<dbReference type="FunFam" id="2.115.10.20:FF:000001">
    <property type="entry name" value="Beta-fructofuranosidase, insoluble isoenzyme CWINV1"/>
    <property type="match status" value="1"/>
</dbReference>
<dbReference type="FunFam" id="2.60.120.560:FF:000002">
    <property type="entry name" value="Beta-fructofuranosidase, insoluble isoenzyme CWINV1"/>
    <property type="match status" value="1"/>
</dbReference>
<dbReference type="Gene3D" id="2.60.120.560">
    <property type="entry name" value="Exo-inulinase, domain 1"/>
    <property type="match status" value="1"/>
</dbReference>
<dbReference type="Gene3D" id="2.115.10.20">
    <property type="entry name" value="Glycosyl hydrolase domain, family 43"/>
    <property type="match status" value="1"/>
</dbReference>
<dbReference type="InterPro" id="IPR013320">
    <property type="entry name" value="ConA-like_dom_sf"/>
</dbReference>
<dbReference type="InterPro" id="IPR050551">
    <property type="entry name" value="Fructan_Metab_Enzymes"/>
</dbReference>
<dbReference type="InterPro" id="IPR001362">
    <property type="entry name" value="Glyco_hydro_32"/>
</dbReference>
<dbReference type="InterPro" id="IPR018053">
    <property type="entry name" value="Glyco_hydro_32_AS"/>
</dbReference>
<dbReference type="InterPro" id="IPR013189">
    <property type="entry name" value="Glyco_hydro_32_C"/>
</dbReference>
<dbReference type="InterPro" id="IPR013148">
    <property type="entry name" value="Glyco_hydro_32_N"/>
</dbReference>
<dbReference type="InterPro" id="IPR023296">
    <property type="entry name" value="Glyco_hydro_beta-prop_sf"/>
</dbReference>
<dbReference type="PANTHER" id="PTHR31953">
    <property type="entry name" value="BETA-FRUCTOFURANOSIDASE, INSOLUBLE ISOENZYME CWINV1-RELATED"/>
    <property type="match status" value="1"/>
</dbReference>
<dbReference type="Pfam" id="PF08244">
    <property type="entry name" value="Glyco_hydro_32C"/>
    <property type="match status" value="1"/>
</dbReference>
<dbReference type="Pfam" id="PF00251">
    <property type="entry name" value="Glyco_hydro_32N"/>
    <property type="match status" value="1"/>
</dbReference>
<dbReference type="SMART" id="SM00640">
    <property type="entry name" value="Glyco_32"/>
    <property type="match status" value="1"/>
</dbReference>
<dbReference type="SUPFAM" id="SSF75005">
    <property type="entry name" value="Arabinanase/levansucrase/invertase"/>
    <property type="match status" value="1"/>
</dbReference>
<dbReference type="SUPFAM" id="SSF49899">
    <property type="entry name" value="Concanavalin A-like lectins/glucanases"/>
    <property type="match status" value="1"/>
</dbReference>
<dbReference type="PROSITE" id="PS00609">
    <property type="entry name" value="GLYCOSYL_HYDROL_F32"/>
    <property type="match status" value="1"/>
</dbReference>
<protein>
    <recommendedName>
        <fullName>Beta-fructofuranosidase, insoluble isoenzyme 1</fullName>
        <ecNumber>3.2.1.26</ecNumber>
    </recommendedName>
    <alternativeName>
        <fullName>Cell wall beta-fructosidase 1</fullName>
    </alternativeName>
    <alternativeName>
        <fullName>Invertase 1</fullName>
    </alternativeName>
    <alternativeName>
        <fullName>Sucrose hydrolase 1</fullName>
    </alternativeName>
</protein>
<keyword id="KW-0134">Cell wall</keyword>
<keyword id="KW-0903">Direct protein sequencing</keyword>
<keyword id="KW-0325">Glycoprotein</keyword>
<keyword id="KW-0326">Glycosidase</keyword>
<keyword id="KW-0378">Hydrolase</keyword>
<keyword id="KW-0964">Secreted</keyword>
<keyword id="KW-0732">Signal</keyword>
<keyword id="KW-0865">Zymogen</keyword>
<accession>P26792</accession>
<sequence>MGVTIRNRNYDHGSLPFLQSLLAILLVTTTTLHINGVEAFHEIHYNLQSVGAENVKQVHRTGYHFQPKQNWINDPNGPMYYKGVYHLFYQYNPKGAVWGNIVWAHSVSTDLINWTPLEPAIFPSKPFDKYGCRSGSATILPGNKPVILYTGIVEGPPKNVQVQNYAIPANLSDPYLRKWIKPDNNPLVVANNGENATAFRDPTTAWLDKSGHWKMLVGSKRNRRGIAYLYRSKDFIKWTKAKHPIHSQANTGMWECPDFFPVSLKGLNGLDTSVTGESVKHVLKVSLDLTRYEYYTVGTYLTDKDRYIPDNTSVDGWAGLRYDYGNFYASKTFFDPSKNRRILWGWANESDSTAHDVAKGWAGIQLIPRTLWLDPSGKQLMQWPIEELETLRGSKVKFSRKQDLSKGILVEVKGITAAQADVEVTFSFKSLAKREPFDPKWLEYDAEKICSLKGSTVQGGVGPFGLLTLASEKLEEYTPVFFRVFKAQNTHKVLMCSDATRSSLKEGLYRPSFAGFVDVDLATDKKISLRSLIDNSVVESFGAKGKTCISSRVYPTLAVYENAHLYVFNNGSETITVENLDAWSMKKPLRMN</sequence>
<organism>
    <name type="scientific">Daucus carota</name>
    <name type="common">Wild carrot</name>
    <dbReference type="NCBI Taxonomy" id="4039"/>
    <lineage>
        <taxon>Eukaryota</taxon>
        <taxon>Viridiplantae</taxon>
        <taxon>Streptophyta</taxon>
        <taxon>Embryophyta</taxon>
        <taxon>Tracheophyta</taxon>
        <taxon>Spermatophyta</taxon>
        <taxon>Magnoliopsida</taxon>
        <taxon>eudicotyledons</taxon>
        <taxon>Gunneridae</taxon>
        <taxon>Pentapetalae</taxon>
        <taxon>asterids</taxon>
        <taxon>campanulids</taxon>
        <taxon>Apiales</taxon>
        <taxon>Apiaceae</taxon>
        <taxon>Apioideae</taxon>
        <taxon>Scandiceae</taxon>
        <taxon>Daucinae</taxon>
        <taxon>Daucus</taxon>
        <taxon>Daucus sect. Daucus</taxon>
    </lineage>
</organism>
<gene>
    <name type="primary">INV1</name>
</gene>
<feature type="signal peptide" evidence="1">
    <location>
        <begin position="1"/>
        <end position="39"/>
    </location>
</feature>
<feature type="propeptide" id="PRO_0000033366" evidence="1">
    <location>
        <begin position="40"/>
        <end position="48"/>
    </location>
</feature>
<feature type="chain" id="PRO_0000033367" description="Beta-fructofuranosidase, insoluble isoenzyme 1">
    <location>
        <begin position="49"/>
        <end position="592"/>
    </location>
</feature>
<feature type="active site" evidence="2">
    <location>
        <position position="74"/>
    </location>
</feature>
<feature type="glycosylation site" id="CAR_000145" description="N-linked (GlcNAc...) (complex) asparagine">
    <location>
        <position position="170"/>
    </location>
</feature>
<feature type="glycosylation site" description="N-linked (GlcNAc...) asparagine" evidence="1">
    <location>
        <position position="195"/>
    </location>
</feature>
<feature type="glycosylation site" id="CAR_000146" description="N-linked (GlcNAc...) (complex) asparagine">
    <location>
        <position position="311"/>
    </location>
</feature>
<feature type="glycosylation site" id="CAR_000147" description="N-linked (GlcNAc...) (high mannose) asparagine">
    <location>
        <position position="348"/>
    </location>
</feature>
<feature type="glycosylation site" description="N-linked (GlcNAc...) asparagine" evidence="1">
    <location>
        <position position="570"/>
    </location>
</feature>
<feature type="sequence conflict" description="In Ref. 2; CAA49162." evidence="3" ref="2">
    <original>R</original>
    <variation>W</variation>
    <location>
        <position position="133"/>
    </location>
</feature>
<feature type="sequence conflict" description="In Ref. 2; CAA49162." evidence="3" ref="2">
    <original>A</original>
    <variation>V</variation>
    <location>
        <position position="487"/>
    </location>
</feature>
<comment type="function">
    <text>May play an important role in phloem unloading and in stress response.</text>
</comment>
<comment type="catalytic activity">
    <reaction evidence="2">
        <text>Hydrolysis of terminal non-reducing beta-D-fructofuranoside residues in beta-D-fructofuranosides.</text>
        <dbReference type="EC" id="3.2.1.26"/>
    </reaction>
</comment>
<comment type="subcellular location">
    <subcellularLocation>
        <location>Secreted</location>
        <location>Cell wall</location>
    </subcellularLocation>
    <text>Ionically bound to the cell wall.</text>
</comment>
<comment type="tissue specificity">
    <text>In leaves and roots of young plants.</text>
</comment>
<comment type="induction">
    <text>By wounding and bacterial infection.</text>
</comment>
<comment type="similarity">
    <text evidence="3">Belongs to the glycosyl hydrolase 32 family.</text>
</comment>
<name>INV1_DAUCA</name>
<evidence type="ECO:0000255" key="1"/>
<evidence type="ECO:0000255" key="2">
    <source>
        <dbReference type="PROSITE-ProRule" id="PRU10067"/>
    </source>
</evidence>
<evidence type="ECO:0000305" key="3"/>
<proteinExistence type="evidence at protein level"/>
<reference key="1">
    <citation type="journal article" date="1990" name="Plant Cell">
        <title>cDNA cloning of carrot extracellular beta-fructosidase and its expression in response to wounding and bacterial infection.</title>
        <authorList>
            <person name="Sturm A."/>
            <person name="Chrispeels M.J."/>
        </authorList>
    </citation>
    <scope>NUCLEOTIDE SEQUENCE [MRNA]</scope>
    <scope>PARTIAL PROTEIN SEQUENCE</scope>
    <source>
        <strain>cv. Queen Anne's Lace</strain>
    </source>
</reference>
<reference key="2">
    <citation type="journal article" date="1993" name="Plant J.">
        <title>Molecular characterization of the gene for carrot cell wall beta-fructosidase.</title>
        <authorList>
            <person name="Ramloch-Lorenz K."/>
            <person name="Knudsen S."/>
            <person name="Sturm A."/>
        </authorList>
    </citation>
    <scope>NUCLEOTIDE SEQUENCE [GENOMIC DNA]</scope>
</reference>